<gene>
    <name evidence="1" type="primary">rpsQ</name>
    <name type="ordered locus">SYNAS_03110</name>
    <name type="ORF">SYN_03256</name>
</gene>
<dbReference type="EMBL" id="CP000252">
    <property type="protein sequence ID" value="ABC76190.1"/>
    <property type="molecule type" value="Genomic_DNA"/>
</dbReference>
<dbReference type="RefSeq" id="WP_011416224.1">
    <property type="nucleotide sequence ID" value="NC_007759.1"/>
</dbReference>
<dbReference type="SMR" id="Q2LQB1"/>
<dbReference type="FunCoup" id="Q2LQB1">
    <property type="interactions" value="386"/>
</dbReference>
<dbReference type="STRING" id="56780.SYN_03256"/>
<dbReference type="KEGG" id="sat:SYN_03256"/>
<dbReference type="eggNOG" id="COG0186">
    <property type="taxonomic scope" value="Bacteria"/>
</dbReference>
<dbReference type="HOGENOM" id="CLU_073626_1_0_7"/>
<dbReference type="InParanoid" id="Q2LQB1"/>
<dbReference type="OrthoDB" id="9811714at2"/>
<dbReference type="Proteomes" id="UP000001933">
    <property type="component" value="Chromosome"/>
</dbReference>
<dbReference type="GO" id="GO:0022627">
    <property type="term" value="C:cytosolic small ribosomal subunit"/>
    <property type="evidence" value="ECO:0007669"/>
    <property type="project" value="TreeGrafter"/>
</dbReference>
<dbReference type="GO" id="GO:0019843">
    <property type="term" value="F:rRNA binding"/>
    <property type="evidence" value="ECO:0007669"/>
    <property type="project" value="UniProtKB-UniRule"/>
</dbReference>
<dbReference type="GO" id="GO:0003735">
    <property type="term" value="F:structural constituent of ribosome"/>
    <property type="evidence" value="ECO:0007669"/>
    <property type="project" value="InterPro"/>
</dbReference>
<dbReference type="GO" id="GO:0006412">
    <property type="term" value="P:translation"/>
    <property type="evidence" value="ECO:0007669"/>
    <property type="project" value="UniProtKB-UniRule"/>
</dbReference>
<dbReference type="CDD" id="cd00364">
    <property type="entry name" value="Ribosomal_uS17"/>
    <property type="match status" value="1"/>
</dbReference>
<dbReference type="Gene3D" id="2.40.50.140">
    <property type="entry name" value="Nucleic acid-binding proteins"/>
    <property type="match status" value="1"/>
</dbReference>
<dbReference type="HAMAP" id="MF_01345_B">
    <property type="entry name" value="Ribosomal_uS17_B"/>
    <property type="match status" value="1"/>
</dbReference>
<dbReference type="InterPro" id="IPR012340">
    <property type="entry name" value="NA-bd_OB-fold"/>
</dbReference>
<dbReference type="InterPro" id="IPR000266">
    <property type="entry name" value="Ribosomal_uS17"/>
</dbReference>
<dbReference type="InterPro" id="IPR019984">
    <property type="entry name" value="Ribosomal_uS17_bact/chlr"/>
</dbReference>
<dbReference type="InterPro" id="IPR019979">
    <property type="entry name" value="Ribosomal_uS17_CS"/>
</dbReference>
<dbReference type="NCBIfam" id="NF004123">
    <property type="entry name" value="PRK05610.1"/>
    <property type="match status" value="1"/>
</dbReference>
<dbReference type="NCBIfam" id="TIGR03635">
    <property type="entry name" value="uS17_bact"/>
    <property type="match status" value="1"/>
</dbReference>
<dbReference type="PANTHER" id="PTHR10744">
    <property type="entry name" value="40S RIBOSOMAL PROTEIN S11 FAMILY MEMBER"/>
    <property type="match status" value="1"/>
</dbReference>
<dbReference type="PANTHER" id="PTHR10744:SF1">
    <property type="entry name" value="SMALL RIBOSOMAL SUBUNIT PROTEIN US17M"/>
    <property type="match status" value="1"/>
</dbReference>
<dbReference type="Pfam" id="PF00366">
    <property type="entry name" value="Ribosomal_S17"/>
    <property type="match status" value="1"/>
</dbReference>
<dbReference type="PRINTS" id="PR00973">
    <property type="entry name" value="RIBOSOMALS17"/>
</dbReference>
<dbReference type="SUPFAM" id="SSF50249">
    <property type="entry name" value="Nucleic acid-binding proteins"/>
    <property type="match status" value="1"/>
</dbReference>
<dbReference type="PROSITE" id="PS00056">
    <property type="entry name" value="RIBOSOMAL_S17"/>
    <property type="match status" value="1"/>
</dbReference>
<sequence>MSERGFNRTIKGVVVSNKMDKTIVIRAERLVKHPVFHKYTRKHVKYMVHDEKNECKVGDTVIVMESRPLSRLKRWRMLRIVAKAE</sequence>
<keyword id="KW-1185">Reference proteome</keyword>
<keyword id="KW-0687">Ribonucleoprotein</keyword>
<keyword id="KW-0689">Ribosomal protein</keyword>
<keyword id="KW-0694">RNA-binding</keyword>
<keyword id="KW-0699">rRNA-binding</keyword>
<accession>Q2LQB1</accession>
<organism>
    <name type="scientific">Syntrophus aciditrophicus (strain SB)</name>
    <dbReference type="NCBI Taxonomy" id="56780"/>
    <lineage>
        <taxon>Bacteria</taxon>
        <taxon>Pseudomonadati</taxon>
        <taxon>Thermodesulfobacteriota</taxon>
        <taxon>Syntrophia</taxon>
        <taxon>Syntrophales</taxon>
        <taxon>Syntrophaceae</taxon>
        <taxon>Syntrophus</taxon>
    </lineage>
</organism>
<name>RS17_SYNAS</name>
<proteinExistence type="inferred from homology"/>
<protein>
    <recommendedName>
        <fullName evidence="1">Small ribosomal subunit protein uS17</fullName>
    </recommendedName>
    <alternativeName>
        <fullName evidence="2">30S ribosomal protein S17</fullName>
    </alternativeName>
</protein>
<feature type="chain" id="PRO_0000233593" description="Small ribosomal subunit protein uS17">
    <location>
        <begin position="1"/>
        <end position="85"/>
    </location>
</feature>
<reference key="1">
    <citation type="journal article" date="2007" name="Proc. Natl. Acad. Sci. U.S.A.">
        <title>The genome of Syntrophus aciditrophicus: life at the thermodynamic limit of microbial growth.</title>
        <authorList>
            <person name="McInerney M.J."/>
            <person name="Rohlin L."/>
            <person name="Mouttaki H."/>
            <person name="Kim U."/>
            <person name="Krupp R.S."/>
            <person name="Rios-Hernandez L."/>
            <person name="Sieber J."/>
            <person name="Struchtemeyer C.G."/>
            <person name="Bhattacharyya A."/>
            <person name="Campbell J.W."/>
            <person name="Gunsalus R.P."/>
        </authorList>
    </citation>
    <scope>NUCLEOTIDE SEQUENCE [LARGE SCALE GENOMIC DNA]</scope>
    <source>
        <strain>SB</strain>
    </source>
</reference>
<comment type="function">
    <text evidence="1">One of the primary rRNA binding proteins, it binds specifically to the 5'-end of 16S ribosomal RNA.</text>
</comment>
<comment type="subunit">
    <text evidence="1">Part of the 30S ribosomal subunit.</text>
</comment>
<comment type="similarity">
    <text evidence="1">Belongs to the universal ribosomal protein uS17 family.</text>
</comment>
<evidence type="ECO:0000255" key="1">
    <source>
        <dbReference type="HAMAP-Rule" id="MF_01345"/>
    </source>
</evidence>
<evidence type="ECO:0000305" key="2"/>